<protein>
    <recommendedName>
        <fullName evidence="1">Urease subunit alpha</fullName>
        <ecNumber evidence="1">3.5.1.5</ecNumber>
    </recommendedName>
    <alternativeName>
        <fullName evidence="1">Urea amidohydrolase subunit alpha</fullName>
    </alternativeName>
</protein>
<sequence>MNYPINRQDYAAMFGPTVGDKIRLADTELLIEVEKDFTTYGEEVKFGGGKVIRDGMGQSPIINGDDDNTAVDTVITNALILDWWGIVKADIGIKQGKIFKIGKAGNPYTQDNIDIIIGPGTEVIAGEGRIVTAGAIDTHIHFICPQQIETALAAGITTMIGGGTGPAAGTTATTCTPGPWHIHRMLQSADAFPINLGFFGKGNTSKPEALEQQIKAGALGLKLHEDWGSTPAAIDTCLTVADLYDIQVAIHTDTLNEGGFVENTIAAFKNRVIHTFHTEGAGGGHAPDILKVCQYDYVLPASTNPTRPYTINTVAEHKDMLMVCHHLDPNIPEDVQFADSRIRPETIAAEDILHDLGAISIMSSDSQAMGRIGEVILRTWQTAHKMKLQRGWLAPNIDPETHYDQSEQDSDRGNDNYRAKRYIAKYTINPAIAHGISQYVGSIEEGKLADLCLWKPAFFGVKPELVIKGGMIVWAQMGDPNASISTPEPVYMRPMFGAFGGAIGATSMTFVSQAAIELEIPKQLGLTSLVAPVTHTRDISKAHLKHNYTTPEMRIDPETYEVWADGELLTCEPVSVLPMAQRYFLF</sequence>
<organism>
    <name type="scientific">Gloeothece citriformis (strain PCC 7424)</name>
    <name type="common">Cyanothece sp. (strain PCC 7424)</name>
    <dbReference type="NCBI Taxonomy" id="65393"/>
    <lineage>
        <taxon>Bacteria</taxon>
        <taxon>Bacillati</taxon>
        <taxon>Cyanobacteriota</taxon>
        <taxon>Cyanophyceae</taxon>
        <taxon>Oscillatoriophycideae</taxon>
        <taxon>Chroococcales</taxon>
        <taxon>Aphanothecaceae</taxon>
        <taxon>Gloeothece</taxon>
        <taxon>Gloeothece citriformis</taxon>
    </lineage>
</organism>
<dbReference type="EC" id="3.5.1.5" evidence="1"/>
<dbReference type="EMBL" id="CP001291">
    <property type="protein sequence ID" value="ACK72781.1"/>
    <property type="molecule type" value="Genomic_DNA"/>
</dbReference>
<dbReference type="RefSeq" id="WP_015956365.1">
    <property type="nucleotide sequence ID" value="NC_011729.1"/>
</dbReference>
<dbReference type="SMR" id="B7K912"/>
<dbReference type="STRING" id="65393.PCC7424_4417"/>
<dbReference type="MEROPS" id="M38.982"/>
<dbReference type="KEGG" id="cyc:PCC7424_4417"/>
<dbReference type="eggNOG" id="COG0804">
    <property type="taxonomic scope" value="Bacteria"/>
</dbReference>
<dbReference type="HOGENOM" id="CLU_000980_0_0_3"/>
<dbReference type="UniPathway" id="UPA00258">
    <property type="reaction ID" value="UER00370"/>
</dbReference>
<dbReference type="Proteomes" id="UP000002384">
    <property type="component" value="Chromosome"/>
</dbReference>
<dbReference type="GO" id="GO:0005737">
    <property type="term" value="C:cytoplasm"/>
    <property type="evidence" value="ECO:0007669"/>
    <property type="project" value="UniProtKB-SubCell"/>
</dbReference>
<dbReference type="GO" id="GO:0016151">
    <property type="term" value="F:nickel cation binding"/>
    <property type="evidence" value="ECO:0007669"/>
    <property type="project" value="UniProtKB-UniRule"/>
</dbReference>
<dbReference type="GO" id="GO:0009039">
    <property type="term" value="F:urease activity"/>
    <property type="evidence" value="ECO:0007669"/>
    <property type="project" value="UniProtKB-UniRule"/>
</dbReference>
<dbReference type="GO" id="GO:0043419">
    <property type="term" value="P:urea catabolic process"/>
    <property type="evidence" value="ECO:0007669"/>
    <property type="project" value="UniProtKB-UniRule"/>
</dbReference>
<dbReference type="CDD" id="cd00375">
    <property type="entry name" value="Urease_alpha"/>
    <property type="match status" value="1"/>
</dbReference>
<dbReference type="Gene3D" id="3.20.20.140">
    <property type="entry name" value="Metal-dependent hydrolases"/>
    <property type="match status" value="1"/>
</dbReference>
<dbReference type="Gene3D" id="2.30.40.10">
    <property type="entry name" value="Urease, subunit C, domain 1"/>
    <property type="match status" value="1"/>
</dbReference>
<dbReference type="HAMAP" id="MF_01953">
    <property type="entry name" value="Urease_alpha"/>
    <property type="match status" value="1"/>
</dbReference>
<dbReference type="InterPro" id="IPR006680">
    <property type="entry name" value="Amidohydro-rel"/>
</dbReference>
<dbReference type="InterPro" id="IPR011059">
    <property type="entry name" value="Metal-dep_hydrolase_composite"/>
</dbReference>
<dbReference type="InterPro" id="IPR032466">
    <property type="entry name" value="Metal_Hydrolase"/>
</dbReference>
<dbReference type="InterPro" id="IPR011612">
    <property type="entry name" value="Urease_alpha_N_dom"/>
</dbReference>
<dbReference type="InterPro" id="IPR050112">
    <property type="entry name" value="Urease_alpha_subunit"/>
</dbReference>
<dbReference type="InterPro" id="IPR017950">
    <property type="entry name" value="Urease_AS"/>
</dbReference>
<dbReference type="InterPro" id="IPR005848">
    <property type="entry name" value="Urease_asu"/>
</dbReference>
<dbReference type="InterPro" id="IPR017951">
    <property type="entry name" value="Urease_asu_c"/>
</dbReference>
<dbReference type="InterPro" id="IPR029754">
    <property type="entry name" value="Urease_Ni-bd"/>
</dbReference>
<dbReference type="NCBIfam" id="NF009686">
    <property type="entry name" value="PRK13207.1"/>
    <property type="match status" value="1"/>
</dbReference>
<dbReference type="NCBIfam" id="TIGR01792">
    <property type="entry name" value="urease_alph"/>
    <property type="match status" value="1"/>
</dbReference>
<dbReference type="PANTHER" id="PTHR43440">
    <property type="entry name" value="UREASE"/>
    <property type="match status" value="1"/>
</dbReference>
<dbReference type="PANTHER" id="PTHR43440:SF1">
    <property type="entry name" value="UREASE"/>
    <property type="match status" value="1"/>
</dbReference>
<dbReference type="Pfam" id="PF01979">
    <property type="entry name" value="Amidohydro_1"/>
    <property type="match status" value="1"/>
</dbReference>
<dbReference type="Pfam" id="PF00449">
    <property type="entry name" value="Urease_alpha"/>
    <property type="match status" value="1"/>
</dbReference>
<dbReference type="PRINTS" id="PR01752">
    <property type="entry name" value="UREASE"/>
</dbReference>
<dbReference type="SUPFAM" id="SSF51338">
    <property type="entry name" value="Composite domain of metallo-dependent hydrolases"/>
    <property type="match status" value="2"/>
</dbReference>
<dbReference type="SUPFAM" id="SSF51556">
    <property type="entry name" value="Metallo-dependent hydrolases"/>
    <property type="match status" value="1"/>
</dbReference>
<dbReference type="PROSITE" id="PS01120">
    <property type="entry name" value="UREASE_1"/>
    <property type="match status" value="1"/>
</dbReference>
<dbReference type="PROSITE" id="PS00145">
    <property type="entry name" value="UREASE_2"/>
    <property type="match status" value="1"/>
</dbReference>
<dbReference type="PROSITE" id="PS51368">
    <property type="entry name" value="UREASE_3"/>
    <property type="match status" value="1"/>
</dbReference>
<reference key="1">
    <citation type="journal article" date="2011" name="MBio">
        <title>Novel metabolic attributes of the genus Cyanothece, comprising a group of unicellular nitrogen-fixing Cyanobacteria.</title>
        <authorList>
            <person name="Bandyopadhyay A."/>
            <person name="Elvitigala T."/>
            <person name="Welsh E."/>
            <person name="Stockel J."/>
            <person name="Liberton M."/>
            <person name="Min H."/>
            <person name="Sherman L.A."/>
            <person name="Pakrasi H.B."/>
        </authorList>
    </citation>
    <scope>NUCLEOTIDE SEQUENCE [LARGE SCALE GENOMIC DNA]</scope>
    <source>
        <strain>PCC 7424</strain>
    </source>
</reference>
<accession>B7K912</accession>
<gene>
    <name evidence="1" type="primary">ureC</name>
    <name type="ordered locus">PCC7424_4417</name>
</gene>
<name>URE1_GLOC7</name>
<keyword id="KW-0963">Cytoplasm</keyword>
<keyword id="KW-0378">Hydrolase</keyword>
<keyword id="KW-0479">Metal-binding</keyword>
<keyword id="KW-0533">Nickel</keyword>
<keyword id="KW-1185">Reference proteome</keyword>
<feature type="chain" id="PRO_1000188870" description="Urease subunit alpha">
    <location>
        <begin position="1"/>
        <end position="586"/>
    </location>
</feature>
<feature type="domain" description="Urease" evidence="1">
    <location>
        <begin position="134"/>
        <end position="586"/>
    </location>
</feature>
<feature type="active site" description="Proton donor" evidence="1">
    <location>
        <position position="325"/>
    </location>
</feature>
<feature type="binding site" evidence="1">
    <location>
        <position position="139"/>
    </location>
    <ligand>
        <name>Ni(2+)</name>
        <dbReference type="ChEBI" id="CHEBI:49786"/>
        <label>1</label>
    </ligand>
</feature>
<feature type="binding site" evidence="1">
    <location>
        <position position="141"/>
    </location>
    <ligand>
        <name>Ni(2+)</name>
        <dbReference type="ChEBI" id="CHEBI:49786"/>
        <label>1</label>
    </ligand>
</feature>
<feature type="binding site" description="via carbamate group" evidence="1">
    <location>
        <position position="222"/>
    </location>
    <ligand>
        <name>Ni(2+)</name>
        <dbReference type="ChEBI" id="CHEBI:49786"/>
        <label>1</label>
    </ligand>
</feature>
<feature type="binding site" description="via carbamate group" evidence="1">
    <location>
        <position position="222"/>
    </location>
    <ligand>
        <name>Ni(2+)</name>
        <dbReference type="ChEBI" id="CHEBI:49786"/>
        <label>2</label>
    </ligand>
</feature>
<feature type="binding site" evidence="1">
    <location>
        <position position="224"/>
    </location>
    <ligand>
        <name>substrate</name>
    </ligand>
</feature>
<feature type="binding site" evidence="1">
    <location>
        <position position="251"/>
    </location>
    <ligand>
        <name>Ni(2+)</name>
        <dbReference type="ChEBI" id="CHEBI:49786"/>
        <label>2</label>
    </ligand>
</feature>
<feature type="binding site" evidence="1">
    <location>
        <position position="277"/>
    </location>
    <ligand>
        <name>Ni(2+)</name>
        <dbReference type="ChEBI" id="CHEBI:49786"/>
        <label>2</label>
    </ligand>
</feature>
<feature type="binding site" evidence="1">
    <location>
        <position position="365"/>
    </location>
    <ligand>
        <name>Ni(2+)</name>
        <dbReference type="ChEBI" id="CHEBI:49786"/>
        <label>1</label>
    </ligand>
</feature>
<feature type="modified residue" description="N6-carboxylysine" evidence="1">
    <location>
        <position position="222"/>
    </location>
</feature>
<comment type="catalytic activity">
    <reaction evidence="1">
        <text>urea + 2 H2O + H(+) = hydrogencarbonate + 2 NH4(+)</text>
        <dbReference type="Rhea" id="RHEA:20557"/>
        <dbReference type="ChEBI" id="CHEBI:15377"/>
        <dbReference type="ChEBI" id="CHEBI:15378"/>
        <dbReference type="ChEBI" id="CHEBI:16199"/>
        <dbReference type="ChEBI" id="CHEBI:17544"/>
        <dbReference type="ChEBI" id="CHEBI:28938"/>
        <dbReference type="EC" id="3.5.1.5"/>
    </reaction>
</comment>
<comment type="cofactor">
    <cofactor evidence="1">
        <name>Ni cation</name>
        <dbReference type="ChEBI" id="CHEBI:25516"/>
    </cofactor>
    <text evidence="1">Binds 2 nickel ions per subunit.</text>
</comment>
<comment type="pathway">
    <text evidence="1">Nitrogen metabolism; urea degradation; CO(2) and NH(3) from urea (urease route): step 1/1.</text>
</comment>
<comment type="subunit">
    <text evidence="1">Heterotrimer of UreA (gamma), UreB (beta) and UreC (alpha) subunits. Three heterotrimers associate to form the active enzyme.</text>
</comment>
<comment type="subcellular location">
    <subcellularLocation>
        <location evidence="1">Cytoplasm</location>
    </subcellularLocation>
</comment>
<comment type="PTM">
    <text evidence="1">Carboxylation allows a single lysine to coordinate two nickel ions.</text>
</comment>
<comment type="similarity">
    <text evidence="1">Belongs to the metallo-dependent hydrolases superfamily. Urease alpha subunit family.</text>
</comment>
<proteinExistence type="inferred from homology"/>
<evidence type="ECO:0000255" key="1">
    <source>
        <dbReference type="HAMAP-Rule" id="MF_01953"/>
    </source>
</evidence>